<proteinExistence type="evidence at protein level"/>
<dbReference type="EMBL" id="D50617">
    <property type="protein sequence ID" value="BAA09210.1"/>
    <property type="molecule type" value="Genomic_DNA"/>
</dbReference>
<dbReference type="EMBL" id="BK006940">
    <property type="protein sequence ID" value="DAA12412.1"/>
    <property type="molecule type" value="Genomic_DNA"/>
</dbReference>
<dbReference type="PIR" id="S56226">
    <property type="entry name" value="S56226"/>
</dbReference>
<dbReference type="RefSeq" id="NP_116625.1">
    <property type="nucleotide sequence ID" value="NM_001179938.1"/>
</dbReference>
<dbReference type="SMR" id="P43569"/>
<dbReference type="BioGRID" id="31118">
    <property type="interactions" value="59"/>
</dbReference>
<dbReference type="DIP" id="DIP-5946N"/>
<dbReference type="FunCoup" id="P43569">
    <property type="interactions" value="524"/>
</dbReference>
<dbReference type="IntAct" id="P43569">
    <property type="interactions" value="4"/>
</dbReference>
<dbReference type="STRING" id="4932.YFL028C"/>
<dbReference type="CarbonylDB" id="P43569"/>
<dbReference type="iPTMnet" id="P43569"/>
<dbReference type="PaxDb" id="4932-YFL028C"/>
<dbReference type="PeptideAtlas" id="P43569"/>
<dbReference type="EnsemblFungi" id="YFL028C_mRNA">
    <property type="protein sequence ID" value="YFL028C"/>
    <property type="gene ID" value="YFL028C"/>
</dbReference>
<dbReference type="GeneID" id="850516"/>
<dbReference type="KEGG" id="sce:YFL028C"/>
<dbReference type="AGR" id="SGD:S000001866"/>
<dbReference type="SGD" id="S000001866">
    <property type="gene designation" value="CAF16"/>
</dbReference>
<dbReference type="VEuPathDB" id="FungiDB:YFL028C"/>
<dbReference type="eggNOG" id="KOG2355">
    <property type="taxonomic scope" value="Eukaryota"/>
</dbReference>
<dbReference type="GeneTree" id="ENSGT00390000009359"/>
<dbReference type="HOGENOM" id="CLU_057592_3_0_1"/>
<dbReference type="InParanoid" id="P43569"/>
<dbReference type="OMA" id="YLGTEWV"/>
<dbReference type="OrthoDB" id="6512918at2759"/>
<dbReference type="BioCyc" id="YEAST:G3O-30432-MONOMER"/>
<dbReference type="BioGRID-ORCS" id="850516">
    <property type="hits" value="4 hits in 10 CRISPR screens"/>
</dbReference>
<dbReference type="PRO" id="PR:P43569"/>
<dbReference type="Proteomes" id="UP000002311">
    <property type="component" value="Chromosome VI"/>
</dbReference>
<dbReference type="RNAct" id="P43569">
    <property type="molecule type" value="protein"/>
</dbReference>
<dbReference type="GO" id="GO:0030014">
    <property type="term" value="C:CCR4-NOT complex"/>
    <property type="evidence" value="ECO:0000314"/>
    <property type="project" value="SGD"/>
</dbReference>
<dbReference type="GO" id="GO:0005737">
    <property type="term" value="C:cytoplasm"/>
    <property type="evidence" value="ECO:0007005"/>
    <property type="project" value="SGD"/>
</dbReference>
<dbReference type="GO" id="GO:0005634">
    <property type="term" value="C:nucleus"/>
    <property type="evidence" value="ECO:0007669"/>
    <property type="project" value="UniProtKB-SubCell"/>
</dbReference>
<dbReference type="GO" id="GO:0005524">
    <property type="term" value="F:ATP binding"/>
    <property type="evidence" value="ECO:0007669"/>
    <property type="project" value="UniProtKB-KW"/>
</dbReference>
<dbReference type="GO" id="GO:0016887">
    <property type="term" value="F:ATP hydrolysis activity"/>
    <property type="evidence" value="ECO:0000250"/>
    <property type="project" value="SGD"/>
</dbReference>
<dbReference type="GO" id="GO:0006357">
    <property type="term" value="P:regulation of transcription by RNA polymerase II"/>
    <property type="evidence" value="ECO:0000315"/>
    <property type="project" value="SGD"/>
</dbReference>
<dbReference type="CDD" id="cd00267">
    <property type="entry name" value="ABC_ATPase"/>
    <property type="match status" value="1"/>
</dbReference>
<dbReference type="FunFam" id="3.40.50.300:FF:001930">
    <property type="entry name" value="ABC ATPase"/>
    <property type="match status" value="1"/>
</dbReference>
<dbReference type="Gene3D" id="3.40.50.300">
    <property type="entry name" value="P-loop containing nucleotide triphosphate hydrolases"/>
    <property type="match status" value="1"/>
</dbReference>
<dbReference type="InterPro" id="IPR003593">
    <property type="entry name" value="AAA+_ATPase"/>
</dbReference>
<dbReference type="InterPro" id="IPR003439">
    <property type="entry name" value="ABC_transporter-like_ATP-bd"/>
</dbReference>
<dbReference type="InterPro" id="IPR027417">
    <property type="entry name" value="P-loop_NTPase"/>
</dbReference>
<dbReference type="PANTHER" id="PTHR43158">
    <property type="entry name" value="SKFA PEPTIDE EXPORT ATP-BINDING PROTEIN SKFE"/>
    <property type="match status" value="1"/>
</dbReference>
<dbReference type="PANTHER" id="PTHR43158:SF2">
    <property type="entry name" value="SKFA PEPTIDE EXPORT ATP-BINDING PROTEIN SKFE"/>
    <property type="match status" value="1"/>
</dbReference>
<dbReference type="Pfam" id="PF00005">
    <property type="entry name" value="ABC_tran"/>
    <property type="match status" value="1"/>
</dbReference>
<dbReference type="SMART" id="SM00382">
    <property type="entry name" value="AAA"/>
    <property type="match status" value="1"/>
</dbReference>
<dbReference type="SUPFAM" id="SSF52540">
    <property type="entry name" value="P-loop containing nucleoside triphosphate hydrolases"/>
    <property type="match status" value="1"/>
</dbReference>
<dbReference type="PROSITE" id="PS50893">
    <property type="entry name" value="ABC_TRANSPORTER_2"/>
    <property type="match status" value="1"/>
</dbReference>
<reference key="1">
    <citation type="journal article" date="1995" name="Nat. Genet.">
        <title>Analysis of the nucleotide sequence of chromosome VI from Saccharomyces cerevisiae.</title>
        <authorList>
            <person name="Murakami Y."/>
            <person name="Naitou M."/>
            <person name="Hagiwara H."/>
            <person name="Shibata T."/>
            <person name="Ozawa M."/>
            <person name="Sasanuma S."/>
            <person name="Sasanuma M."/>
            <person name="Tsuchiya Y."/>
            <person name="Soeda E."/>
            <person name="Yokoyama K."/>
            <person name="Yamazaki M."/>
            <person name="Tashiro H."/>
            <person name="Eki T."/>
        </authorList>
    </citation>
    <scope>NUCLEOTIDE SEQUENCE [LARGE SCALE GENOMIC DNA]</scope>
    <source>
        <strain>ATCC 204508 / S288c</strain>
    </source>
</reference>
<reference key="2">
    <citation type="journal article" date="2014" name="G3 (Bethesda)">
        <title>The reference genome sequence of Saccharomyces cerevisiae: Then and now.</title>
        <authorList>
            <person name="Engel S.R."/>
            <person name="Dietrich F.S."/>
            <person name="Fisk D.G."/>
            <person name="Binkley G."/>
            <person name="Balakrishnan R."/>
            <person name="Costanzo M.C."/>
            <person name="Dwight S.S."/>
            <person name="Hitz B.C."/>
            <person name="Karra K."/>
            <person name="Nash R.S."/>
            <person name="Weng S."/>
            <person name="Wong E.D."/>
            <person name="Lloyd P."/>
            <person name="Skrzypek M.S."/>
            <person name="Miyasato S.R."/>
            <person name="Simison M."/>
            <person name="Cherry J.M."/>
        </authorList>
    </citation>
    <scope>GENOME REANNOTATION</scope>
    <source>
        <strain>ATCC 204508 / S288c</strain>
    </source>
</reference>
<reference key="3">
    <citation type="journal article" date="2001" name="J. Biol. Chem.">
        <title>Characterization of CAF4 and CAF16 reveals a functional connection between the CCR4-NOT complex and a subset of SRB proteins of the RNA polymerase II holoenzyme.</title>
        <authorList>
            <person name="Liu H.-Y."/>
            <person name="Chiang Y.-C."/>
            <person name="Pan J."/>
            <person name="Chen J."/>
            <person name="Salvadore C."/>
            <person name="Audino D.C."/>
            <person name="Badarinarayana V."/>
            <person name="Palaniswamy V."/>
            <person name="Anderson B."/>
            <person name="Denis C.L."/>
        </authorList>
    </citation>
    <scope>INTERACTION WITH CCR4 AND SSN2</scope>
</reference>
<reference key="4">
    <citation type="journal article" date="2003" name="Nature">
        <title>Global analysis of protein localization in budding yeast.</title>
        <authorList>
            <person name="Huh W.-K."/>
            <person name="Falvo J.V."/>
            <person name="Gerke L.C."/>
            <person name="Carroll A.S."/>
            <person name="Howson R.W."/>
            <person name="Weissman J.S."/>
            <person name="O'Shea E.K."/>
        </authorList>
    </citation>
    <scope>SUBCELLULAR LOCATION [LARGE SCALE ANALYSIS]</scope>
</reference>
<reference key="5">
    <citation type="journal article" date="2003" name="Nature">
        <title>Global analysis of protein expression in yeast.</title>
        <authorList>
            <person name="Ghaemmaghami S."/>
            <person name="Huh W.-K."/>
            <person name="Bower K."/>
            <person name="Howson R.W."/>
            <person name="Belle A."/>
            <person name="Dephoure N."/>
            <person name="O'Shea E.K."/>
            <person name="Weissman J.S."/>
        </authorList>
    </citation>
    <scope>LEVEL OF PROTEIN EXPRESSION [LARGE SCALE ANALYSIS]</scope>
</reference>
<reference key="6">
    <citation type="journal article" date="2012" name="Proc. Natl. Acad. Sci. U.S.A.">
        <title>N-terminal acetylome analyses and functional insights of the N-terminal acetyltransferase NatB.</title>
        <authorList>
            <person name="Van Damme P."/>
            <person name="Lasa M."/>
            <person name="Polevoda B."/>
            <person name="Gazquez C."/>
            <person name="Elosegui-Artola A."/>
            <person name="Kim D.S."/>
            <person name="De Juan-Pardo E."/>
            <person name="Demeyer K."/>
            <person name="Hole K."/>
            <person name="Larrea E."/>
            <person name="Timmerman E."/>
            <person name="Prieto J."/>
            <person name="Arnesen T."/>
            <person name="Sherman F."/>
            <person name="Gevaert K."/>
            <person name="Aldabe R."/>
        </authorList>
    </citation>
    <scope>IDENTIFICATION BY MASS SPECTROMETRY [LARGE SCALE ANALYSIS]</scope>
</reference>
<sequence>MVSQFAIEVRNLTYKFKESSDPSVVDINLQIPWNTRSLVVGANGAGKSTLLKLLSGKHLCLDGKILVNGLDPFSPLSMNQVDDDESVEDSTNYQTTTYLGTEWCHMSIINRDIGVLELLKSIGFDHFRERGERLVRILDIDVRWRMHRLSDGQKRRVQLAMGLLKPWRVLLLDEVTVDLDVIARARLLEFLKWETETRRCSVVYATHIFDGLAKWPNQVYHMKSGKIVDNLDYQKDVEFSEVVNAKVNGQVAFENDNNKVVISKVNSLHPLALEWLKRDNQIPDKEIGI</sequence>
<feature type="chain" id="PRO_0000093464" description="CCR4-associated factor 16">
    <location>
        <begin position="1"/>
        <end position="289"/>
    </location>
</feature>
<feature type="domain" description="ABC transporter" evidence="1">
    <location>
        <begin position="7"/>
        <end position="249"/>
    </location>
</feature>
<feature type="binding site" evidence="1">
    <location>
        <begin position="41"/>
        <end position="48"/>
    </location>
    <ligand>
        <name>ATP</name>
        <dbReference type="ChEBI" id="CHEBI:30616"/>
    </ligand>
</feature>
<gene>
    <name type="primary">CAF16</name>
    <name type="ordered locus">YFL028C</name>
</gene>
<protein>
    <recommendedName>
        <fullName>CCR4-associated factor 16</fullName>
    </recommendedName>
</protein>
<keyword id="KW-0067">ATP-binding</keyword>
<keyword id="KW-0963">Cytoplasm</keyword>
<keyword id="KW-0547">Nucleotide-binding</keyword>
<keyword id="KW-0539">Nucleus</keyword>
<keyword id="KW-1185">Reference proteome</keyword>
<name>CAF16_YEAST</name>
<accession>P43569</accession>
<accession>D6VTK2</accession>
<organism>
    <name type="scientific">Saccharomyces cerevisiae (strain ATCC 204508 / S288c)</name>
    <name type="common">Baker's yeast</name>
    <dbReference type="NCBI Taxonomy" id="559292"/>
    <lineage>
        <taxon>Eukaryota</taxon>
        <taxon>Fungi</taxon>
        <taxon>Dikarya</taxon>
        <taxon>Ascomycota</taxon>
        <taxon>Saccharomycotina</taxon>
        <taxon>Saccharomycetes</taxon>
        <taxon>Saccharomycetales</taxon>
        <taxon>Saccharomycetaceae</taxon>
        <taxon>Saccharomyces</taxon>
    </lineage>
</organism>
<comment type="subunit">
    <text evidence="2">Interacts with CCR4 and SSN2.</text>
</comment>
<comment type="interaction">
    <interactant intactId="EBI-22808">
        <id>P43569</id>
    </interactant>
    <interactant intactId="EBI-16451">
        <id>P39954</id>
        <label>SAH1</label>
    </interactant>
    <organismsDiffer>false</organismsDiffer>
    <experiments>4</experiments>
</comment>
<comment type="subcellular location">
    <subcellularLocation>
        <location evidence="3">Cytoplasm</location>
    </subcellularLocation>
    <subcellularLocation>
        <location evidence="3">Nucleus</location>
    </subcellularLocation>
</comment>
<comment type="miscellaneous">
    <text evidence="4">Present with 1620 molecules/cell in log phase SD medium.</text>
</comment>
<comment type="similarity">
    <text evidence="5">Belongs to the ABC transporter superfamily.</text>
</comment>
<evidence type="ECO:0000255" key="1">
    <source>
        <dbReference type="PROSITE-ProRule" id="PRU00434"/>
    </source>
</evidence>
<evidence type="ECO:0000269" key="2">
    <source>
    </source>
</evidence>
<evidence type="ECO:0000269" key="3">
    <source>
    </source>
</evidence>
<evidence type="ECO:0000269" key="4">
    <source>
    </source>
</evidence>
<evidence type="ECO:0000305" key="5"/>